<keyword id="KW-0507">mRNA processing</keyword>
<keyword id="KW-0539">Nucleus</keyword>
<keyword id="KW-1185">Reference proteome</keyword>
<proteinExistence type="evidence at protein level"/>
<sequence length="188" mass="20866">MDLPKDKSDRTHQRINLNNSGTDRTNDLYLHIVQTFGCIETTATENATKLLMLGDVEVEISASSVSIEWTQKSMISQTIADSIVIMIIGLCASDKNVLSESELKERNHNVWKIQELQNLFREQFGDSFSIDEGIGKKENVKNGSVTIGKSKATIDFSTMKLIDCNSNPLKGRVESILSIGQKLTTPLC</sequence>
<gene>
    <name type="primary">SYC1</name>
    <name type="ordered locus">YOR179C</name>
</gene>
<protein>
    <recommendedName>
        <fullName>Protein SYC1</fullName>
    </recommendedName>
</protein>
<dbReference type="EMBL" id="Z75087">
    <property type="protein sequence ID" value="CAA99388.1"/>
    <property type="molecule type" value="Genomic_DNA"/>
</dbReference>
<dbReference type="EMBL" id="BK006948">
    <property type="protein sequence ID" value="DAA10951.1"/>
    <property type="molecule type" value="Genomic_DNA"/>
</dbReference>
<dbReference type="PIR" id="S67071">
    <property type="entry name" value="S67071"/>
</dbReference>
<dbReference type="RefSeq" id="NP_014822.1">
    <property type="nucleotide sequence ID" value="NM_001183598.1"/>
</dbReference>
<dbReference type="SMR" id="Q08553"/>
<dbReference type="BioGRID" id="34574">
    <property type="interactions" value="190"/>
</dbReference>
<dbReference type="ComplexPortal" id="CPX-1053">
    <property type="entry name" value="Cleavage and polyadenylation specificity factor complex"/>
</dbReference>
<dbReference type="DIP" id="DIP-6797N"/>
<dbReference type="FunCoup" id="Q08553">
    <property type="interactions" value="142"/>
</dbReference>
<dbReference type="IntAct" id="Q08553">
    <property type="interactions" value="29"/>
</dbReference>
<dbReference type="MINT" id="Q08553"/>
<dbReference type="STRING" id="4932.YOR179C"/>
<dbReference type="PaxDb" id="4932-YOR179C"/>
<dbReference type="PeptideAtlas" id="Q08553"/>
<dbReference type="EnsemblFungi" id="YOR179C_mRNA">
    <property type="protein sequence ID" value="YOR179C"/>
    <property type="gene ID" value="YOR179C"/>
</dbReference>
<dbReference type="GeneID" id="854351"/>
<dbReference type="KEGG" id="sce:YOR179C"/>
<dbReference type="AGR" id="SGD:S000005705"/>
<dbReference type="SGD" id="S000005705">
    <property type="gene designation" value="SYC1"/>
</dbReference>
<dbReference type="VEuPathDB" id="FungiDB:YOR179C"/>
<dbReference type="eggNOG" id="KOG1137">
    <property type="taxonomic scope" value="Eukaryota"/>
</dbReference>
<dbReference type="HOGENOM" id="CLU_1441798_0_0_1"/>
<dbReference type="InParanoid" id="Q08553"/>
<dbReference type="OMA" id="FGCIETT"/>
<dbReference type="OrthoDB" id="4070302at2759"/>
<dbReference type="BioCyc" id="YEAST:G3O-33691-MONOMER"/>
<dbReference type="BioGRID-ORCS" id="854351">
    <property type="hits" value="6 hits in 10 CRISPR screens"/>
</dbReference>
<dbReference type="PRO" id="PR:Q08553"/>
<dbReference type="Proteomes" id="UP000002311">
    <property type="component" value="Chromosome XV"/>
</dbReference>
<dbReference type="RNAct" id="Q08553">
    <property type="molecule type" value="protein"/>
</dbReference>
<dbReference type="GO" id="GO:0005847">
    <property type="term" value="C:mRNA cleavage and polyadenylation specificity factor complex"/>
    <property type="evidence" value="ECO:0000314"/>
    <property type="project" value="SGD"/>
</dbReference>
<dbReference type="GO" id="GO:0005634">
    <property type="term" value="C:nucleus"/>
    <property type="evidence" value="ECO:0007005"/>
    <property type="project" value="SGD"/>
</dbReference>
<dbReference type="GO" id="GO:0003723">
    <property type="term" value="F:RNA binding"/>
    <property type="evidence" value="ECO:0000305"/>
    <property type="project" value="SGD"/>
</dbReference>
<dbReference type="GO" id="GO:0006397">
    <property type="term" value="P:mRNA processing"/>
    <property type="evidence" value="ECO:0007669"/>
    <property type="project" value="UniProtKB-KW"/>
</dbReference>
<dbReference type="GO" id="GO:0031441">
    <property type="term" value="P:negative regulation of mRNA 3'-end processing"/>
    <property type="evidence" value="ECO:0000315"/>
    <property type="project" value="SGD"/>
</dbReference>
<dbReference type="GO" id="GO:0030846">
    <property type="term" value="P:termination of RNA polymerase II transcription, poly(A)-coupled"/>
    <property type="evidence" value="ECO:0000303"/>
    <property type="project" value="ComplexPortal"/>
</dbReference>
<dbReference type="InterPro" id="IPR021718">
    <property type="entry name" value="CPSF73-100_C"/>
</dbReference>
<dbReference type="Pfam" id="PF11718">
    <property type="entry name" value="CPSF73-100_C"/>
    <property type="match status" value="1"/>
</dbReference>
<dbReference type="SMART" id="SM01098">
    <property type="entry name" value="CPSF73-100_C"/>
    <property type="match status" value="1"/>
</dbReference>
<name>SYC1_YEAST</name>
<reference key="1">
    <citation type="journal article" date="1997" name="Nature">
        <title>The nucleotide sequence of Saccharomyces cerevisiae chromosome XV.</title>
        <authorList>
            <person name="Dujon B."/>
            <person name="Albermann K."/>
            <person name="Aldea M."/>
            <person name="Alexandraki D."/>
            <person name="Ansorge W."/>
            <person name="Arino J."/>
            <person name="Benes V."/>
            <person name="Bohn C."/>
            <person name="Bolotin-Fukuhara M."/>
            <person name="Bordonne R."/>
            <person name="Boyer J."/>
            <person name="Camasses A."/>
            <person name="Casamayor A."/>
            <person name="Casas C."/>
            <person name="Cheret G."/>
            <person name="Cziepluch C."/>
            <person name="Daignan-Fornier B."/>
            <person name="Dang V.-D."/>
            <person name="de Haan M."/>
            <person name="Delius H."/>
            <person name="Durand P."/>
            <person name="Fairhead C."/>
            <person name="Feldmann H."/>
            <person name="Gaillon L."/>
            <person name="Galisson F."/>
            <person name="Gamo F.-J."/>
            <person name="Gancedo C."/>
            <person name="Goffeau A."/>
            <person name="Goulding S.E."/>
            <person name="Grivell L.A."/>
            <person name="Habbig B."/>
            <person name="Hand N.J."/>
            <person name="Hani J."/>
            <person name="Hattenhorst U."/>
            <person name="Hebling U."/>
            <person name="Hernando Y."/>
            <person name="Herrero E."/>
            <person name="Heumann K."/>
            <person name="Hiesel R."/>
            <person name="Hilger F."/>
            <person name="Hofmann B."/>
            <person name="Hollenberg C.P."/>
            <person name="Hughes B."/>
            <person name="Jauniaux J.-C."/>
            <person name="Kalogeropoulos A."/>
            <person name="Katsoulou C."/>
            <person name="Kordes E."/>
            <person name="Lafuente M.J."/>
            <person name="Landt O."/>
            <person name="Louis E.J."/>
            <person name="Maarse A.C."/>
            <person name="Madania A."/>
            <person name="Mannhaupt G."/>
            <person name="Marck C."/>
            <person name="Martin R.P."/>
            <person name="Mewes H.-W."/>
            <person name="Michaux G."/>
            <person name="Paces V."/>
            <person name="Parle-McDermott A.G."/>
            <person name="Pearson B.M."/>
            <person name="Perrin A."/>
            <person name="Pettersson B."/>
            <person name="Poch O."/>
            <person name="Pohl T.M."/>
            <person name="Poirey R."/>
            <person name="Portetelle D."/>
            <person name="Pujol A."/>
            <person name="Purnelle B."/>
            <person name="Ramezani Rad M."/>
            <person name="Rechmann S."/>
            <person name="Schwager C."/>
            <person name="Schweizer M."/>
            <person name="Sor F."/>
            <person name="Sterky F."/>
            <person name="Tarassov I.A."/>
            <person name="Teodoru C."/>
            <person name="Tettelin H."/>
            <person name="Thierry A."/>
            <person name="Tobiasch E."/>
            <person name="Tzermia M."/>
            <person name="Uhlen M."/>
            <person name="Unseld M."/>
            <person name="Valens M."/>
            <person name="Vandenbol M."/>
            <person name="Vetter I."/>
            <person name="Vlcek C."/>
            <person name="Voet M."/>
            <person name="Volckaert G."/>
            <person name="Voss H."/>
            <person name="Wambutt R."/>
            <person name="Wedler H."/>
            <person name="Wiemann S."/>
            <person name="Winsor B."/>
            <person name="Wolfe K.H."/>
            <person name="Zollner A."/>
            <person name="Zumstein E."/>
            <person name="Kleine K."/>
        </authorList>
    </citation>
    <scope>NUCLEOTIDE SEQUENCE [LARGE SCALE GENOMIC DNA]</scope>
    <source>
        <strain>ATCC 204508 / S288c</strain>
    </source>
</reference>
<reference key="2">
    <citation type="journal article" date="2014" name="G3 (Bethesda)">
        <title>The reference genome sequence of Saccharomyces cerevisiae: Then and now.</title>
        <authorList>
            <person name="Engel S.R."/>
            <person name="Dietrich F.S."/>
            <person name="Fisk D.G."/>
            <person name="Binkley G."/>
            <person name="Balakrishnan R."/>
            <person name="Costanzo M.C."/>
            <person name="Dwight S.S."/>
            <person name="Hitz B.C."/>
            <person name="Karra K."/>
            <person name="Nash R.S."/>
            <person name="Weng S."/>
            <person name="Wong E.D."/>
            <person name="Lloyd P."/>
            <person name="Skrzypek M.S."/>
            <person name="Miyasato S.R."/>
            <person name="Simison M."/>
            <person name="Cherry J.M."/>
        </authorList>
    </citation>
    <scope>GENOME REANNOTATION</scope>
    <source>
        <strain>ATCC 204508 / S288c</strain>
    </source>
</reference>
<reference key="3">
    <citation type="journal article" date="2003" name="J. Biol. Chem.">
        <title>Organization and function of APT, a subcomplex of the yeast cleavage and polyadenylation factor involved in the formation of mRNA and small nucleolar RNA 3'-ends.</title>
        <authorList>
            <person name="Nedea E."/>
            <person name="He X."/>
            <person name="Kim M."/>
            <person name="Pootoolal J."/>
            <person name="Zhong G."/>
            <person name="Canadien V."/>
            <person name="Hughes T."/>
            <person name="Buratowski S."/>
            <person name="Moore C.L."/>
            <person name="Greenblatt J."/>
        </authorList>
    </citation>
    <scope>IDENTIFICATION IN THE CPF COMPLEX</scope>
    <scope>COMPOSITION OF THE APT COMPLEX</scope>
    <scope>SUBCELLULAR LOCATION</scope>
    <scope>IDENTIFICATION BY MASS SPECTROMETRY</scope>
</reference>
<reference key="4">
    <citation type="journal article" date="2003" name="Nature">
        <title>Global analysis of protein localization in budding yeast.</title>
        <authorList>
            <person name="Huh W.-K."/>
            <person name="Falvo J.V."/>
            <person name="Gerke L.C."/>
            <person name="Carroll A.S."/>
            <person name="Howson R.W."/>
            <person name="Weissman J.S."/>
            <person name="O'Shea E.K."/>
        </authorList>
    </citation>
    <scope>SUBCELLULAR LOCATION [LARGE SCALE ANALYSIS]</scope>
</reference>
<reference key="5">
    <citation type="journal article" date="2003" name="Nature">
        <title>Global analysis of protein expression in yeast.</title>
        <authorList>
            <person name="Ghaemmaghami S."/>
            <person name="Huh W.-K."/>
            <person name="Bower K."/>
            <person name="Howson R.W."/>
            <person name="Belle A."/>
            <person name="Dephoure N."/>
            <person name="O'Shea E.K."/>
            <person name="Weissman J.S."/>
        </authorList>
    </citation>
    <scope>LEVEL OF PROTEIN EXPRESSION [LARGE SCALE ANALYSIS]</scope>
</reference>
<reference key="6">
    <citation type="journal article" date="2012" name="Proc. Natl. Acad. Sci. U.S.A.">
        <title>N-terminal acetylome analyses and functional insights of the N-terminal acetyltransferase NatB.</title>
        <authorList>
            <person name="Van Damme P."/>
            <person name="Lasa M."/>
            <person name="Polevoda B."/>
            <person name="Gazquez C."/>
            <person name="Elosegui-Artola A."/>
            <person name="Kim D.S."/>
            <person name="De Juan-Pardo E."/>
            <person name="Demeyer K."/>
            <person name="Hole K."/>
            <person name="Larrea E."/>
            <person name="Timmerman E."/>
            <person name="Prieto J."/>
            <person name="Arnesen T."/>
            <person name="Sherman F."/>
            <person name="Gevaert K."/>
            <person name="Aldabe R."/>
        </authorList>
    </citation>
    <scope>IDENTIFICATION BY MASS SPECTROMETRY [LARGE SCALE ANALYSIS]</scope>
</reference>
<organism>
    <name type="scientific">Saccharomyces cerevisiae (strain ATCC 204508 / S288c)</name>
    <name type="common">Baker's yeast</name>
    <dbReference type="NCBI Taxonomy" id="559292"/>
    <lineage>
        <taxon>Eukaryota</taxon>
        <taxon>Fungi</taxon>
        <taxon>Dikarya</taxon>
        <taxon>Ascomycota</taxon>
        <taxon>Saccharomycotina</taxon>
        <taxon>Saccharomycetes</taxon>
        <taxon>Saccharomycetales</taxon>
        <taxon>Saccharomycetaceae</taxon>
        <taxon>Saccharomyces</taxon>
    </lineage>
</organism>
<accession>Q08553</accession>
<accession>D6W2N5</accession>
<feature type="chain" id="PRO_0000076351" description="Protein SYC1">
    <location>
        <begin position="1"/>
        <end position="188"/>
    </location>
</feature>
<comment type="function">
    <text>Component of the cleavage and polyadenylation factor (CPF) complex, which plays a key role in polyadenylation-dependent pre-mRNA 3'-end formation and cooperates with cleavage factors including the CFIA complex and NAB4/CFIB. Component of the APT complex, which may be involved in polyadenylation-independent transcript 3'-end formation, including snoRNAs and snRNAs.</text>
</comment>
<comment type="subunit">
    <text evidence="1">Component of the cleavage and polyadenylation factor (CPF) complex, which is composed of at least PTI1, SYC1, SSU72, GLC7, MPE1, REF2, PFS2, PTA1, YSH1/BRR5, SWD2, CFT2/YDH1, YTH1, CFT1/YHH1, FIP1 and PAP1. Component of the APT complex, which is a subcomplex of CPF, and is composed of PTI1, SYC1, SSU72, GLC7, REF2, PTA1 and SWD2.</text>
</comment>
<comment type="subcellular location">
    <subcellularLocation>
        <location evidence="1 2">Nucleus</location>
    </subcellularLocation>
</comment>
<comment type="miscellaneous">
    <text evidence="3">Present with 1430 molecules/cell in log phase SD medium.</text>
</comment>
<evidence type="ECO:0000269" key="1">
    <source>
    </source>
</evidence>
<evidence type="ECO:0000269" key="2">
    <source>
    </source>
</evidence>
<evidence type="ECO:0000269" key="3">
    <source>
    </source>
</evidence>